<sequence>MKTEIHPDYHTITVVMTDGTEYQTRSTWGKEGDKLNLDIDPKSHPAWTGGTQQVLDRGGRVSRFQKKFSGFLKKD</sequence>
<reference key="1">
    <citation type="submission" date="2008-05" db="EMBL/GenBank/DDBJ databases">
        <title>Complete sequence of Rhodopseudomonas palustris TIE-1.</title>
        <authorList>
            <consortium name="US DOE Joint Genome Institute"/>
            <person name="Lucas S."/>
            <person name="Copeland A."/>
            <person name="Lapidus A."/>
            <person name="Glavina del Rio T."/>
            <person name="Dalin E."/>
            <person name="Tice H."/>
            <person name="Pitluck S."/>
            <person name="Chain P."/>
            <person name="Malfatti S."/>
            <person name="Shin M."/>
            <person name="Vergez L."/>
            <person name="Lang D."/>
            <person name="Schmutz J."/>
            <person name="Larimer F."/>
            <person name="Land M."/>
            <person name="Hauser L."/>
            <person name="Kyrpides N."/>
            <person name="Mikhailova N."/>
            <person name="Emerson D."/>
            <person name="Newman D.K."/>
            <person name="Roden E."/>
            <person name="Richardson P."/>
        </authorList>
    </citation>
    <scope>NUCLEOTIDE SEQUENCE [LARGE SCALE GENOMIC DNA]</scope>
    <source>
        <strain>TIE-1</strain>
    </source>
</reference>
<feature type="chain" id="PRO_1000126710" description="Large ribosomal subunit protein bL31">
    <location>
        <begin position="1"/>
        <end position="75"/>
    </location>
</feature>
<gene>
    <name evidence="1" type="primary">rpmE</name>
    <name type="ordered locus">Rpal_0988</name>
</gene>
<dbReference type="EMBL" id="CP001096">
    <property type="protein sequence ID" value="ACE99544.1"/>
    <property type="molecule type" value="Genomic_DNA"/>
</dbReference>
<dbReference type="RefSeq" id="WP_011156453.1">
    <property type="nucleotide sequence ID" value="NC_011004.1"/>
</dbReference>
<dbReference type="SMR" id="B3QFB0"/>
<dbReference type="GeneID" id="66891937"/>
<dbReference type="KEGG" id="rpt:Rpal_0988"/>
<dbReference type="HOGENOM" id="CLU_114306_3_2_5"/>
<dbReference type="OrthoDB" id="9803251at2"/>
<dbReference type="Proteomes" id="UP000001725">
    <property type="component" value="Chromosome"/>
</dbReference>
<dbReference type="GO" id="GO:1990904">
    <property type="term" value="C:ribonucleoprotein complex"/>
    <property type="evidence" value="ECO:0007669"/>
    <property type="project" value="UniProtKB-KW"/>
</dbReference>
<dbReference type="GO" id="GO:0005840">
    <property type="term" value="C:ribosome"/>
    <property type="evidence" value="ECO:0007669"/>
    <property type="project" value="UniProtKB-KW"/>
</dbReference>
<dbReference type="GO" id="GO:0019843">
    <property type="term" value="F:rRNA binding"/>
    <property type="evidence" value="ECO:0007669"/>
    <property type="project" value="UniProtKB-KW"/>
</dbReference>
<dbReference type="GO" id="GO:0003735">
    <property type="term" value="F:structural constituent of ribosome"/>
    <property type="evidence" value="ECO:0007669"/>
    <property type="project" value="InterPro"/>
</dbReference>
<dbReference type="GO" id="GO:0006412">
    <property type="term" value="P:translation"/>
    <property type="evidence" value="ECO:0007669"/>
    <property type="project" value="UniProtKB-UniRule"/>
</dbReference>
<dbReference type="Gene3D" id="4.10.830.30">
    <property type="entry name" value="Ribosomal protein L31"/>
    <property type="match status" value="1"/>
</dbReference>
<dbReference type="HAMAP" id="MF_00501">
    <property type="entry name" value="Ribosomal_bL31_1"/>
    <property type="match status" value="1"/>
</dbReference>
<dbReference type="InterPro" id="IPR034704">
    <property type="entry name" value="Ribosomal_bL28/bL31-like_sf"/>
</dbReference>
<dbReference type="InterPro" id="IPR002150">
    <property type="entry name" value="Ribosomal_bL31"/>
</dbReference>
<dbReference type="InterPro" id="IPR027491">
    <property type="entry name" value="Ribosomal_bL31_A"/>
</dbReference>
<dbReference type="InterPro" id="IPR042105">
    <property type="entry name" value="Ribosomal_bL31_sf"/>
</dbReference>
<dbReference type="NCBIfam" id="TIGR00105">
    <property type="entry name" value="L31"/>
    <property type="match status" value="1"/>
</dbReference>
<dbReference type="NCBIfam" id="NF001809">
    <property type="entry name" value="PRK00528.1"/>
    <property type="match status" value="1"/>
</dbReference>
<dbReference type="PANTHER" id="PTHR33280">
    <property type="entry name" value="50S RIBOSOMAL PROTEIN L31, CHLOROPLASTIC"/>
    <property type="match status" value="1"/>
</dbReference>
<dbReference type="PANTHER" id="PTHR33280:SF6">
    <property type="entry name" value="LARGE RIBOSOMAL SUBUNIT PROTEIN BL31A"/>
    <property type="match status" value="1"/>
</dbReference>
<dbReference type="Pfam" id="PF01197">
    <property type="entry name" value="Ribosomal_L31"/>
    <property type="match status" value="1"/>
</dbReference>
<dbReference type="PRINTS" id="PR01249">
    <property type="entry name" value="RIBOSOMALL31"/>
</dbReference>
<dbReference type="SUPFAM" id="SSF143800">
    <property type="entry name" value="L28p-like"/>
    <property type="match status" value="1"/>
</dbReference>
<dbReference type="PROSITE" id="PS01143">
    <property type="entry name" value="RIBOSOMAL_L31"/>
    <property type="match status" value="1"/>
</dbReference>
<comment type="function">
    <text evidence="1">Binds the 23S rRNA.</text>
</comment>
<comment type="subunit">
    <text evidence="1">Part of the 50S ribosomal subunit.</text>
</comment>
<comment type="similarity">
    <text evidence="1">Belongs to the bacterial ribosomal protein bL31 family. Type A subfamily.</text>
</comment>
<evidence type="ECO:0000255" key="1">
    <source>
        <dbReference type="HAMAP-Rule" id="MF_00501"/>
    </source>
</evidence>
<evidence type="ECO:0000305" key="2"/>
<accession>B3QFB0</accession>
<proteinExistence type="inferred from homology"/>
<name>RL31_RHOPT</name>
<organism>
    <name type="scientific">Rhodopseudomonas palustris (strain TIE-1)</name>
    <dbReference type="NCBI Taxonomy" id="395960"/>
    <lineage>
        <taxon>Bacteria</taxon>
        <taxon>Pseudomonadati</taxon>
        <taxon>Pseudomonadota</taxon>
        <taxon>Alphaproteobacteria</taxon>
        <taxon>Hyphomicrobiales</taxon>
        <taxon>Nitrobacteraceae</taxon>
        <taxon>Rhodopseudomonas</taxon>
    </lineage>
</organism>
<protein>
    <recommendedName>
        <fullName evidence="1">Large ribosomal subunit protein bL31</fullName>
    </recommendedName>
    <alternativeName>
        <fullName evidence="2">50S ribosomal protein L31</fullName>
    </alternativeName>
</protein>
<keyword id="KW-0687">Ribonucleoprotein</keyword>
<keyword id="KW-0689">Ribosomal protein</keyword>
<keyword id="KW-0694">RNA-binding</keyword>
<keyword id="KW-0699">rRNA-binding</keyword>